<gene>
    <name evidence="1" type="primary">purQ</name>
    <name type="ordered locus">TTE0810</name>
</gene>
<protein>
    <recommendedName>
        <fullName evidence="1">Phosphoribosylformylglycinamidine synthase subunit PurQ</fullName>
        <shortName evidence="1">FGAM synthase</shortName>
        <ecNumber evidence="1">6.3.5.3</ecNumber>
    </recommendedName>
    <alternativeName>
        <fullName evidence="1">Formylglycinamide ribonucleotide amidotransferase subunit I</fullName>
        <shortName evidence="1">FGAR amidotransferase I</shortName>
        <shortName evidence="1">FGAR-AT I</shortName>
    </alternativeName>
    <alternativeName>
        <fullName evidence="1">Glutaminase PurQ</fullName>
        <ecNumber evidence="1">3.5.1.2</ecNumber>
    </alternativeName>
    <alternativeName>
        <fullName evidence="1">Phosphoribosylformylglycinamidine synthase subunit I</fullName>
    </alternativeName>
</protein>
<name>PURQ_CALS4</name>
<accession>Q8RBK6</accession>
<sequence length="224" mass="24723">MKFAVIVFPGSNCDVDCYYAVKDGLGEGVEYVWHQEKNLSKYDVIMLPGGFSYGDYLRAGAIARFSPVMEAVREEAEKGKFIIGICNGFQILTEAGLLPGALRKNEGLKFICKTVSIIVENDKTPFTTRLKKGQEILLPIAHGEGNYYVDDKTLKELKGNNQIVFRYKENINGSVERIAGVINKKGNVLGMMPHPERAYDSLLGNTDGLYILGSIVDNFVKGGV</sequence>
<comment type="function">
    <text evidence="1">Part of the phosphoribosylformylglycinamidine synthase complex involved in the purines biosynthetic pathway. Catalyzes the ATP-dependent conversion of formylglycinamide ribonucleotide (FGAR) and glutamine to yield formylglycinamidine ribonucleotide (FGAM) and glutamate. The FGAM synthase complex is composed of three subunits. PurQ produces an ammonia molecule by converting glutamine to glutamate. PurL transfers the ammonia molecule to FGAR to form FGAM in an ATP-dependent manner. PurS interacts with PurQ and PurL and is thought to assist in the transfer of the ammonia molecule from PurQ to PurL.</text>
</comment>
<comment type="catalytic activity">
    <reaction evidence="1">
        <text>N(2)-formyl-N(1)-(5-phospho-beta-D-ribosyl)glycinamide + L-glutamine + ATP + H2O = 2-formamido-N(1)-(5-O-phospho-beta-D-ribosyl)acetamidine + L-glutamate + ADP + phosphate + H(+)</text>
        <dbReference type="Rhea" id="RHEA:17129"/>
        <dbReference type="ChEBI" id="CHEBI:15377"/>
        <dbReference type="ChEBI" id="CHEBI:15378"/>
        <dbReference type="ChEBI" id="CHEBI:29985"/>
        <dbReference type="ChEBI" id="CHEBI:30616"/>
        <dbReference type="ChEBI" id="CHEBI:43474"/>
        <dbReference type="ChEBI" id="CHEBI:58359"/>
        <dbReference type="ChEBI" id="CHEBI:147286"/>
        <dbReference type="ChEBI" id="CHEBI:147287"/>
        <dbReference type="ChEBI" id="CHEBI:456216"/>
        <dbReference type="EC" id="6.3.5.3"/>
    </reaction>
</comment>
<comment type="catalytic activity">
    <reaction evidence="1">
        <text>L-glutamine + H2O = L-glutamate + NH4(+)</text>
        <dbReference type="Rhea" id="RHEA:15889"/>
        <dbReference type="ChEBI" id="CHEBI:15377"/>
        <dbReference type="ChEBI" id="CHEBI:28938"/>
        <dbReference type="ChEBI" id="CHEBI:29985"/>
        <dbReference type="ChEBI" id="CHEBI:58359"/>
        <dbReference type="EC" id="3.5.1.2"/>
    </reaction>
</comment>
<comment type="pathway">
    <text evidence="1">Purine metabolism; IMP biosynthesis via de novo pathway; 5-amino-1-(5-phospho-D-ribosyl)imidazole from N(2)-formyl-N(1)-(5-phospho-D-ribosyl)glycinamide: step 1/2.</text>
</comment>
<comment type="subunit">
    <text evidence="1">Part of the FGAM synthase complex composed of 1 PurL, 1 PurQ and 2 PurS subunits.</text>
</comment>
<comment type="subcellular location">
    <subcellularLocation>
        <location evidence="1">Cytoplasm</location>
    </subcellularLocation>
</comment>
<keyword id="KW-0067">ATP-binding</keyword>
<keyword id="KW-0963">Cytoplasm</keyword>
<keyword id="KW-0315">Glutamine amidotransferase</keyword>
<keyword id="KW-0378">Hydrolase</keyword>
<keyword id="KW-0436">Ligase</keyword>
<keyword id="KW-0547">Nucleotide-binding</keyword>
<keyword id="KW-0658">Purine biosynthesis</keyword>
<keyword id="KW-1185">Reference proteome</keyword>
<evidence type="ECO:0000255" key="1">
    <source>
        <dbReference type="HAMAP-Rule" id="MF_00421"/>
    </source>
</evidence>
<proteinExistence type="inferred from homology"/>
<reference key="1">
    <citation type="journal article" date="2002" name="Genome Res.">
        <title>A complete sequence of the T. tengcongensis genome.</title>
        <authorList>
            <person name="Bao Q."/>
            <person name="Tian Y."/>
            <person name="Li W."/>
            <person name="Xu Z."/>
            <person name="Xuan Z."/>
            <person name="Hu S."/>
            <person name="Dong W."/>
            <person name="Yang J."/>
            <person name="Chen Y."/>
            <person name="Xue Y."/>
            <person name="Xu Y."/>
            <person name="Lai X."/>
            <person name="Huang L."/>
            <person name="Dong X."/>
            <person name="Ma Y."/>
            <person name="Ling L."/>
            <person name="Tan H."/>
            <person name="Chen R."/>
            <person name="Wang J."/>
            <person name="Yu J."/>
            <person name="Yang H."/>
        </authorList>
    </citation>
    <scope>NUCLEOTIDE SEQUENCE [LARGE SCALE GENOMIC DNA]</scope>
    <source>
        <strain>DSM 15242 / JCM 11007 / NBRC 100824 / MB4</strain>
    </source>
</reference>
<dbReference type="EC" id="6.3.5.3" evidence="1"/>
<dbReference type="EC" id="3.5.1.2" evidence="1"/>
<dbReference type="EMBL" id="AE008691">
    <property type="protein sequence ID" value="AAM24067.1"/>
    <property type="molecule type" value="Genomic_DNA"/>
</dbReference>
<dbReference type="RefSeq" id="WP_011025204.1">
    <property type="nucleotide sequence ID" value="NC_003869.1"/>
</dbReference>
<dbReference type="SMR" id="Q8RBK6"/>
<dbReference type="STRING" id="273068.TTE0810"/>
<dbReference type="KEGG" id="tte:TTE0810"/>
<dbReference type="eggNOG" id="COG0047">
    <property type="taxonomic scope" value="Bacteria"/>
</dbReference>
<dbReference type="HOGENOM" id="CLU_001031_3_1_9"/>
<dbReference type="OrthoDB" id="9804441at2"/>
<dbReference type="UniPathway" id="UPA00074">
    <property type="reaction ID" value="UER00128"/>
</dbReference>
<dbReference type="Proteomes" id="UP000000555">
    <property type="component" value="Chromosome"/>
</dbReference>
<dbReference type="GO" id="GO:0005737">
    <property type="term" value="C:cytoplasm"/>
    <property type="evidence" value="ECO:0007669"/>
    <property type="project" value="UniProtKB-SubCell"/>
</dbReference>
<dbReference type="GO" id="GO:0005524">
    <property type="term" value="F:ATP binding"/>
    <property type="evidence" value="ECO:0007669"/>
    <property type="project" value="UniProtKB-KW"/>
</dbReference>
<dbReference type="GO" id="GO:0004359">
    <property type="term" value="F:glutaminase activity"/>
    <property type="evidence" value="ECO:0007669"/>
    <property type="project" value="UniProtKB-EC"/>
</dbReference>
<dbReference type="GO" id="GO:0004642">
    <property type="term" value="F:phosphoribosylformylglycinamidine synthase activity"/>
    <property type="evidence" value="ECO:0007669"/>
    <property type="project" value="UniProtKB-UniRule"/>
</dbReference>
<dbReference type="GO" id="GO:0006189">
    <property type="term" value="P:'de novo' IMP biosynthetic process"/>
    <property type="evidence" value="ECO:0007669"/>
    <property type="project" value="UniProtKB-UniRule"/>
</dbReference>
<dbReference type="CDD" id="cd01740">
    <property type="entry name" value="GATase1_FGAR_AT"/>
    <property type="match status" value="1"/>
</dbReference>
<dbReference type="FunFam" id="3.40.50.880:FF:000019">
    <property type="entry name" value="Phosphoribosylformylglycinamidine synthase subunit PurQ"/>
    <property type="match status" value="1"/>
</dbReference>
<dbReference type="Gene3D" id="3.40.50.880">
    <property type="match status" value="1"/>
</dbReference>
<dbReference type="HAMAP" id="MF_00421">
    <property type="entry name" value="PurQ"/>
    <property type="match status" value="1"/>
</dbReference>
<dbReference type="InterPro" id="IPR029062">
    <property type="entry name" value="Class_I_gatase-like"/>
</dbReference>
<dbReference type="InterPro" id="IPR010075">
    <property type="entry name" value="PRibForGlyAmidine_synth_PurQ"/>
</dbReference>
<dbReference type="NCBIfam" id="TIGR01737">
    <property type="entry name" value="FGAM_synth_I"/>
    <property type="match status" value="1"/>
</dbReference>
<dbReference type="NCBIfam" id="NF002957">
    <property type="entry name" value="PRK03619.1"/>
    <property type="match status" value="1"/>
</dbReference>
<dbReference type="PANTHER" id="PTHR47552">
    <property type="entry name" value="PHOSPHORIBOSYLFORMYLGLYCINAMIDINE SYNTHASE SUBUNIT PURQ"/>
    <property type="match status" value="1"/>
</dbReference>
<dbReference type="PANTHER" id="PTHR47552:SF1">
    <property type="entry name" value="PHOSPHORIBOSYLFORMYLGLYCINAMIDINE SYNTHASE SUBUNIT PURQ"/>
    <property type="match status" value="1"/>
</dbReference>
<dbReference type="Pfam" id="PF13507">
    <property type="entry name" value="GATase_5"/>
    <property type="match status" value="1"/>
</dbReference>
<dbReference type="PIRSF" id="PIRSF001586">
    <property type="entry name" value="FGAM_synth_I"/>
    <property type="match status" value="1"/>
</dbReference>
<dbReference type="SMART" id="SM01211">
    <property type="entry name" value="GATase_5"/>
    <property type="match status" value="1"/>
</dbReference>
<dbReference type="SUPFAM" id="SSF52317">
    <property type="entry name" value="Class I glutamine amidotransferase-like"/>
    <property type="match status" value="1"/>
</dbReference>
<dbReference type="PROSITE" id="PS51273">
    <property type="entry name" value="GATASE_TYPE_1"/>
    <property type="match status" value="1"/>
</dbReference>
<feature type="chain" id="PRO_0000100601" description="Phosphoribosylformylglycinamidine synthase subunit PurQ">
    <location>
        <begin position="1"/>
        <end position="224"/>
    </location>
</feature>
<feature type="domain" description="Glutamine amidotransferase type-1" evidence="1">
    <location>
        <begin position="2"/>
        <end position="224"/>
    </location>
</feature>
<feature type="active site" description="Nucleophile" evidence="1">
    <location>
        <position position="86"/>
    </location>
</feature>
<feature type="active site" evidence="1">
    <location>
        <position position="194"/>
    </location>
</feature>
<feature type="active site" evidence="1">
    <location>
        <position position="196"/>
    </location>
</feature>
<organism>
    <name type="scientific">Caldanaerobacter subterraneus subsp. tengcongensis (strain DSM 15242 / JCM 11007 / NBRC 100824 / MB4)</name>
    <name type="common">Thermoanaerobacter tengcongensis</name>
    <dbReference type="NCBI Taxonomy" id="273068"/>
    <lineage>
        <taxon>Bacteria</taxon>
        <taxon>Bacillati</taxon>
        <taxon>Bacillota</taxon>
        <taxon>Clostridia</taxon>
        <taxon>Thermoanaerobacterales</taxon>
        <taxon>Thermoanaerobacteraceae</taxon>
        <taxon>Caldanaerobacter</taxon>
    </lineage>
</organism>